<dbReference type="EMBL" id="AY681314">
    <property type="protein sequence ID" value="AAU93672.1"/>
    <property type="molecule type" value="mRNA"/>
</dbReference>
<dbReference type="SMR" id="Q5Y4W8"/>
<dbReference type="ArachnoServer" id="AS000096">
    <property type="toxin name" value="U2-agatoxin-Ao1r"/>
</dbReference>
<dbReference type="GO" id="GO:0005576">
    <property type="term" value="C:extracellular region"/>
    <property type="evidence" value="ECO:0007669"/>
    <property type="project" value="UniProtKB-SubCell"/>
</dbReference>
<dbReference type="GO" id="GO:0090729">
    <property type="term" value="F:toxin activity"/>
    <property type="evidence" value="ECO:0007669"/>
    <property type="project" value="UniProtKB-KW"/>
</dbReference>
<dbReference type="Pfam" id="PF05980">
    <property type="entry name" value="Toxin_7"/>
    <property type="match status" value="1"/>
</dbReference>
<dbReference type="SUPFAM" id="SSF57059">
    <property type="entry name" value="omega toxin-like"/>
    <property type="match status" value="1"/>
</dbReference>
<feature type="signal peptide" evidence="2">
    <location>
        <begin position="1"/>
        <end position="20"/>
    </location>
</feature>
<feature type="propeptide" id="PRO_5000093635" evidence="2">
    <location>
        <begin position="21"/>
        <end position="34"/>
    </location>
</feature>
<feature type="chain" id="PRO_5000093636" description="U2-agatoxin-Ao1r">
    <location>
        <begin position="35"/>
        <end position="69"/>
    </location>
</feature>
<feature type="modified residue" description="Leucine amide" evidence="1">
    <location>
        <position position="69"/>
    </location>
</feature>
<feature type="disulfide bond" evidence="1">
    <location>
        <begin position="37"/>
        <end position="53"/>
    </location>
</feature>
<feature type="disulfide bond" evidence="1">
    <location>
        <begin position="44"/>
        <end position="58"/>
    </location>
</feature>
<feature type="disulfide bond" evidence="1">
    <location>
        <begin position="52"/>
        <end position="68"/>
    </location>
</feature>
<accession>Q5Y4W8</accession>
<keyword id="KW-0027">Amidation</keyword>
<keyword id="KW-1015">Disulfide bond</keyword>
<keyword id="KW-0960">Knottin</keyword>
<keyword id="KW-0528">Neurotoxin</keyword>
<keyword id="KW-0964">Secreted</keyword>
<keyword id="KW-0732">Signal</keyword>
<keyword id="KW-0800">Toxin</keyword>
<evidence type="ECO:0000250" key="1"/>
<evidence type="ECO:0000255" key="2"/>
<evidence type="ECO:0000305" key="3"/>
<protein>
    <recommendedName>
        <fullName>U2-agatoxin-Ao1r</fullName>
        <shortName>U2-AGTX-Ao1r</shortName>
    </recommendedName>
    <alternativeName>
        <fullName>Agel_17</fullName>
    </alternativeName>
</protein>
<organism>
    <name type="scientific">Agelena orientalis</name>
    <name type="common">Funnel-web spider</name>
    <dbReference type="NCBI Taxonomy" id="293813"/>
    <lineage>
        <taxon>Eukaryota</taxon>
        <taxon>Metazoa</taxon>
        <taxon>Ecdysozoa</taxon>
        <taxon>Arthropoda</taxon>
        <taxon>Chelicerata</taxon>
        <taxon>Arachnida</taxon>
        <taxon>Araneae</taxon>
        <taxon>Araneomorphae</taxon>
        <taxon>Entelegynae</taxon>
        <taxon>Agelenidae</taxon>
        <taxon>Agelena</taxon>
    </lineage>
</organism>
<proteinExistence type="evidence at transcript level"/>
<comment type="function">
    <text evidence="1">Insect active toxin causing rapid but reversible paralysis in crickets. No activity shown in mammals. Does not show effect on mammalian voltage-gated calcium channels (By similarity).</text>
</comment>
<comment type="subcellular location">
    <subcellularLocation>
        <location evidence="1">Secreted</location>
    </subcellularLocation>
</comment>
<comment type="tissue specificity">
    <text>Expressed by the venom gland.</text>
</comment>
<comment type="domain">
    <text evidence="1">The presence of a 'disulfide through disulfide knot' structurally defines this protein as a knottin.</text>
</comment>
<comment type="similarity">
    <text evidence="3">Belongs to the neurotoxin 01 (U2-agtx) family.</text>
</comment>
<reference key="1">
    <citation type="journal article" date="2005" name="Proteins">
        <title>A novel strategy for the identification of toxinlike structures in spider venom.</title>
        <authorList>
            <person name="Kozlov S.A."/>
            <person name="Malyavka A."/>
            <person name="McCutchen B."/>
            <person name="Lu A."/>
            <person name="Schepers E."/>
            <person name="Herrmann R."/>
            <person name="Grishin E.V."/>
        </authorList>
    </citation>
    <scope>NUCLEOTIDE SEQUENCE [MRNA]</scope>
    <source>
        <tissue>Venom gland</tissue>
    </source>
</reference>
<name>TAG2R_AGEOR</name>
<sequence length="70" mass="7867">MRSIISLILISAMVFSMIAPVPEEERLQLSEDERGGCLPHNRFCNALTGPRCCSRLRCKELSIWDSICLG</sequence>